<evidence type="ECO:0000255" key="1">
    <source>
        <dbReference type="HAMAP-Rule" id="MF_00049"/>
    </source>
</evidence>
<reference key="1">
    <citation type="submission" date="2008-04" db="EMBL/GenBank/DDBJ databases">
        <title>Complete sequence of Yersinia pseudotuberculosis PB1/+.</title>
        <authorList>
            <person name="Copeland A."/>
            <person name="Lucas S."/>
            <person name="Lapidus A."/>
            <person name="Glavina del Rio T."/>
            <person name="Dalin E."/>
            <person name="Tice H."/>
            <person name="Bruce D."/>
            <person name="Goodwin L."/>
            <person name="Pitluck S."/>
            <person name="Munk A.C."/>
            <person name="Brettin T."/>
            <person name="Detter J.C."/>
            <person name="Han C."/>
            <person name="Tapia R."/>
            <person name="Schmutz J."/>
            <person name="Larimer F."/>
            <person name="Land M."/>
            <person name="Hauser L."/>
            <person name="Challacombe J.F."/>
            <person name="Green L."/>
            <person name="Lindler L.E."/>
            <person name="Nikolich M.P."/>
            <person name="Richardson P."/>
        </authorList>
    </citation>
    <scope>NUCLEOTIDE SEQUENCE [LARGE SCALE GENOMIC DNA]</scope>
    <source>
        <strain>PB1/+</strain>
    </source>
</reference>
<organism>
    <name type="scientific">Yersinia pseudotuberculosis serotype IB (strain PB1/+)</name>
    <dbReference type="NCBI Taxonomy" id="502801"/>
    <lineage>
        <taxon>Bacteria</taxon>
        <taxon>Pseudomonadati</taxon>
        <taxon>Pseudomonadota</taxon>
        <taxon>Gammaproteobacteria</taxon>
        <taxon>Enterobacterales</taxon>
        <taxon>Yersiniaceae</taxon>
        <taxon>Yersinia</taxon>
    </lineage>
</organism>
<accession>B2K886</accession>
<proteinExistence type="inferred from homology"/>
<gene>
    <name evidence="1" type="primary">leuS</name>
    <name type="ordered locus">YPTS_1160</name>
</gene>
<comment type="catalytic activity">
    <reaction evidence="1">
        <text>tRNA(Leu) + L-leucine + ATP = L-leucyl-tRNA(Leu) + AMP + diphosphate</text>
        <dbReference type="Rhea" id="RHEA:11688"/>
        <dbReference type="Rhea" id="RHEA-COMP:9613"/>
        <dbReference type="Rhea" id="RHEA-COMP:9622"/>
        <dbReference type="ChEBI" id="CHEBI:30616"/>
        <dbReference type="ChEBI" id="CHEBI:33019"/>
        <dbReference type="ChEBI" id="CHEBI:57427"/>
        <dbReference type="ChEBI" id="CHEBI:78442"/>
        <dbReference type="ChEBI" id="CHEBI:78494"/>
        <dbReference type="ChEBI" id="CHEBI:456215"/>
        <dbReference type="EC" id="6.1.1.4"/>
    </reaction>
</comment>
<comment type="subcellular location">
    <subcellularLocation>
        <location evidence="1">Cytoplasm</location>
    </subcellularLocation>
</comment>
<comment type="similarity">
    <text evidence="1">Belongs to the class-I aminoacyl-tRNA synthetase family.</text>
</comment>
<keyword id="KW-0030">Aminoacyl-tRNA synthetase</keyword>
<keyword id="KW-0067">ATP-binding</keyword>
<keyword id="KW-0963">Cytoplasm</keyword>
<keyword id="KW-0436">Ligase</keyword>
<keyword id="KW-0547">Nucleotide-binding</keyword>
<keyword id="KW-0648">Protein biosynthesis</keyword>
<feature type="chain" id="PRO_1000091382" description="Leucine--tRNA ligase">
    <location>
        <begin position="1"/>
        <end position="860"/>
    </location>
</feature>
<feature type="short sequence motif" description="'HIGH' region">
    <location>
        <begin position="42"/>
        <end position="52"/>
    </location>
</feature>
<feature type="short sequence motif" description="'KMSKS' region">
    <location>
        <begin position="619"/>
        <end position="623"/>
    </location>
</feature>
<feature type="binding site" evidence="1">
    <location>
        <position position="622"/>
    </location>
    <ligand>
        <name>ATP</name>
        <dbReference type="ChEBI" id="CHEBI:30616"/>
    </ligand>
</feature>
<sequence length="860" mass="97051">MQEQYRPEDIETQVQLHWQEKQTFKVTEDASKEKYYCLSMLPYPSGRLHMGHVRNYTIGDVISRYQRMLGKNVLQPIGWDAFGLPAEGAAVKNNTAPAPWTYDNIEYMKNQLKLLGFGYDWDREIATCKPDYYRWEQWFFTKLYEKGMVYKKTSAVNWCPHDLTVLANEQVIDGCCWRCDTKVERKEIPQWFIKITDYAEQLLNDLDTLESWPEQVKTMQRNWIGRSEGVDIVFDVVDSEEKLSVYTTRPDTFMGVTYVAVAAGHPLSLQAAATNPALADFVAECRNTKVAEAEMATMEKKGMATGLYAIHPLTGEKLPIWAANFVLMDYGTGAVMAVPGHDARDWEFATKYNLPIKPVILAADGSEPDLSQEAMTEKGTLFNSGEFDGLNHEDGFNAIADKLVALGVGQRKVNYRLRDWGVSRQRYWGAPIPMVTLEDGTVVPTPEDQLPVILPEDVVMDGISSPIKADPEWAKTTVNGIPGLRETDTFDTFMESSWYYARYTCPQYDDGMLDPAAANYWLPVDQYVGGIEHAIMHLMYFRFFHKLLRDAGLVDSDEPAKRLLCQGMVLADAFYYTGNNGERIWVSPVDAIVERDDKGRIVKAVDAEGHELVYAGMSKMSKSKNNGIDPQVMVEKYGADTVRLFMMFASPAEMTLEWQESGVEGANRFLKRVWRLAFDHTAKGAVKPLDIASLTEEQKSLRRDLHKTIAKVTDDVGRRQTFNTAIAAVMELMNKLGRAPQETEQDRALMQEALLAVVRMLYPFTPHVCFSLWQALGGEGDIDTAPWPIADEQAMVEDSKLVVVQVNGKVRGRITVPADATEQQVRERAGQEHLVAKYLDGVTVRKVIYVPGKLLNLVVG</sequence>
<protein>
    <recommendedName>
        <fullName evidence="1">Leucine--tRNA ligase</fullName>
        <ecNumber evidence="1">6.1.1.4</ecNumber>
    </recommendedName>
    <alternativeName>
        <fullName evidence="1">Leucyl-tRNA synthetase</fullName>
        <shortName evidence="1">LeuRS</shortName>
    </alternativeName>
</protein>
<name>SYL_YERPB</name>
<dbReference type="EC" id="6.1.1.4" evidence="1"/>
<dbReference type="EMBL" id="CP001048">
    <property type="protein sequence ID" value="ACC88136.1"/>
    <property type="molecule type" value="Genomic_DNA"/>
</dbReference>
<dbReference type="RefSeq" id="WP_002210333.1">
    <property type="nucleotide sequence ID" value="NZ_CP009780.1"/>
</dbReference>
<dbReference type="SMR" id="B2K886"/>
<dbReference type="GeneID" id="57976085"/>
<dbReference type="KEGG" id="ypb:YPTS_1160"/>
<dbReference type="PATRIC" id="fig|502801.10.peg.506"/>
<dbReference type="GO" id="GO:0005829">
    <property type="term" value="C:cytosol"/>
    <property type="evidence" value="ECO:0007669"/>
    <property type="project" value="TreeGrafter"/>
</dbReference>
<dbReference type="GO" id="GO:0002161">
    <property type="term" value="F:aminoacyl-tRNA deacylase activity"/>
    <property type="evidence" value="ECO:0007669"/>
    <property type="project" value="InterPro"/>
</dbReference>
<dbReference type="GO" id="GO:0005524">
    <property type="term" value="F:ATP binding"/>
    <property type="evidence" value="ECO:0007669"/>
    <property type="project" value="UniProtKB-UniRule"/>
</dbReference>
<dbReference type="GO" id="GO:0004823">
    <property type="term" value="F:leucine-tRNA ligase activity"/>
    <property type="evidence" value="ECO:0007669"/>
    <property type="project" value="UniProtKB-UniRule"/>
</dbReference>
<dbReference type="GO" id="GO:0006429">
    <property type="term" value="P:leucyl-tRNA aminoacylation"/>
    <property type="evidence" value="ECO:0007669"/>
    <property type="project" value="UniProtKB-UniRule"/>
</dbReference>
<dbReference type="CDD" id="cd07958">
    <property type="entry name" value="Anticodon_Ia_Leu_BEm"/>
    <property type="match status" value="1"/>
</dbReference>
<dbReference type="CDD" id="cd00812">
    <property type="entry name" value="LeuRS_core"/>
    <property type="match status" value="1"/>
</dbReference>
<dbReference type="FunFam" id="1.10.730.10:FF:000002">
    <property type="entry name" value="Leucine--tRNA ligase"/>
    <property type="match status" value="2"/>
</dbReference>
<dbReference type="FunFam" id="2.20.28.290:FF:000001">
    <property type="entry name" value="Leucine--tRNA ligase"/>
    <property type="match status" value="1"/>
</dbReference>
<dbReference type="FunFam" id="3.10.20.590:FF:000001">
    <property type="entry name" value="Leucine--tRNA ligase"/>
    <property type="match status" value="1"/>
</dbReference>
<dbReference type="FunFam" id="3.40.50.620:FF:000003">
    <property type="entry name" value="Leucine--tRNA ligase"/>
    <property type="match status" value="1"/>
</dbReference>
<dbReference type="FunFam" id="3.40.50.620:FF:000124">
    <property type="entry name" value="Leucine--tRNA ligase"/>
    <property type="match status" value="1"/>
</dbReference>
<dbReference type="FunFam" id="3.90.740.10:FF:000012">
    <property type="entry name" value="Leucine--tRNA ligase"/>
    <property type="match status" value="1"/>
</dbReference>
<dbReference type="Gene3D" id="2.20.28.290">
    <property type="match status" value="1"/>
</dbReference>
<dbReference type="Gene3D" id="3.10.20.590">
    <property type="match status" value="1"/>
</dbReference>
<dbReference type="Gene3D" id="3.40.50.620">
    <property type="entry name" value="HUPs"/>
    <property type="match status" value="2"/>
</dbReference>
<dbReference type="Gene3D" id="1.10.730.10">
    <property type="entry name" value="Isoleucyl-tRNA Synthetase, Domain 1"/>
    <property type="match status" value="1"/>
</dbReference>
<dbReference type="Gene3D" id="3.90.740.10">
    <property type="entry name" value="Valyl/Leucyl/Isoleucyl-tRNA synthetase, editing domain"/>
    <property type="match status" value="1"/>
</dbReference>
<dbReference type="HAMAP" id="MF_00049_B">
    <property type="entry name" value="Leu_tRNA_synth_B"/>
    <property type="match status" value="1"/>
</dbReference>
<dbReference type="InterPro" id="IPR001412">
    <property type="entry name" value="aa-tRNA-synth_I_CS"/>
</dbReference>
<dbReference type="InterPro" id="IPR002300">
    <property type="entry name" value="aa-tRNA-synth_Ia"/>
</dbReference>
<dbReference type="InterPro" id="IPR002302">
    <property type="entry name" value="Leu-tRNA-ligase"/>
</dbReference>
<dbReference type="InterPro" id="IPR025709">
    <property type="entry name" value="Leu_tRNA-synth_edit"/>
</dbReference>
<dbReference type="InterPro" id="IPR013155">
    <property type="entry name" value="M/V/L/I-tRNA-synth_anticd-bd"/>
</dbReference>
<dbReference type="InterPro" id="IPR015413">
    <property type="entry name" value="Methionyl/Leucyl_tRNA_Synth"/>
</dbReference>
<dbReference type="InterPro" id="IPR014729">
    <property type="entry name" value="Rossmann-like_a/b/a_fold"/>
</dbReference>
<dbReference type="InterPro" id="IPR009080">
    <property type="entry name" value="tRNAsynth_Ia_anticodon-bd"/>
</dbReference>
<dbReference type="InterPro" id="IPR009008">
    <property type="entry name" value="Val/Leu/Ile-tRNA-synth_edit"/>
</dbReference>
<dbReference type="NCBIfam" id="TIGR00396">
    <property type="entry name" value="leuS_bact"/>
    <property type="match status" value="1"/>
</dbReference>
<dbReference type="PANTHER" id="PTHR43740:SF2">
    <property type="entry name" value="LEUCINE--TRNA LIGASE, MITOCHONDRIAL"/>
    <property type="match status" value="1"/>
</dbReference>
<dbReference type="PANTHER" id="PTHR43740">
    <property type="entry name" value="LEUCYL-TRNA SYNTHETASE"/>
    <property type="match status" value="1"/>
</dbReference>
<dbReference type="Pfam" id="PF08264">
    <property type="entry name" value="Anticodon_1"/>
    <property type="match status" value="1"/>
</dbReference>
<dbReference type="Pfam" id="PF00133">
    <property type="entry name" value="tRNA-synt_1"/>
    <property type="match status" value="2"/>
</dbReference>
<dbReference type="Pfam" id="PF13603">
    <property type="entry name" value="tRNA-synt_1_2"/>
    <property type="match status" value="1"/>
</dbReference>
<dbReference type="Pfam" id="PF09334">
    <property type="entry name" value="tRNA-synt_1g"/>
    <property type="match status" value="1"/>
</dbReference>
<dbReference type="PRINTS" id="PR00985">
    <property type="entry name" value="TRNASYNTHLEU"/>
</dbReference>
<dbReference type="SUPFAM" id="SSF47323">
    <property type="entry name" value="Anticodon-binding domain of a subclass of class I aminoacyl-tRNA synthetases"/>
    <property type="match status" value="1"/>
</dbReference>
<dbReference type="SUPFAM" id="SSF52374">
    <property type="entry name" value="Nucleotidylyl transferase"/>
    <property type="match status" value="1"/>
</dbReference>
<dbReference type="SUPFAM" id="SSF50677">
    <property type="entry name" value="ValRS/IleRS/LeuRS editing domain"/>
    <property type="match status" value="1"/>
</dbReference>
<dbReference type="PROSITE" id="PS00178">
    <property type="entry name" value="AA_TRNA_LIGASE_I"/>
    <property type="match status" value="1"/>
</dbReference>